<proteinExistence type="evidence at protein level"/>
<protein>
    <recommendedName>
        <fullName evidence="3">Aminotransferase PigE</fullName>
        <ecNumber evidence="1">2.6.1.-</ecNumber>
    </recommendedName>
</protein>
<name>PIGE_SERSF</name>
<accession>A0A0J9X1Q5</accession>
<accession>A0A0H2UKZ2</accession>
<sequence length="853" mass="93256">MKFGFIAHPTSLGLKRYVKMLDLLQRNSTEQHSGYTRELWERQNLVPFMNFARITSATGATCEGVIKYMPLVADEMLADARGIAARVVQGIEELAGDGAELVGLGGFTSIVGRRGEATAEKSPVPVTSGNSLTTYAGYKALMQIQSWLEIRPEEEPVAIVGYPGSICLALSRLLLAHGFSLHLLHRAGNHDRSELLSHLPEEYHSRVTLTSDPEDLYPRCKLFAAATSAGGVIDPARLQPGSIFIDVALPRDIASETRPARDDILIIDGGCVTATDAVKLGGESLNVTIKQQLNGCMAETIVLALENRRENFSLGRYLAPEKVLEIGEIAERHGFFAYPLASYGERIDRQSVTNLKRYYHHDIYAGESADAALPASRLAFIDAVIAQTPAREDTLDRYHQYINPMMVDFLKLQRCDNVFRSAAGTQLYDDAGEAFLDMVAGYGCLNLGHNPQPVVNALKNYLDAQGPNFIQYISIPEQTAKLAEVLCRLAPGNMGRVFFSNSGTEAVEAAMKIAKASTGKPGIAYLRNSYHGKTLGALSITGRDKHRRYFTPLLDAMVEVPFGDLAALREALNREDVGALMIEPIQGEGGVHIPPAGYLQAVQQLCRETGVLLMVDEVQTGLGRTGKLFACEWDGIEPDVLMLSKSLSGGLIPIGATLCRADLWQKAYGTADRFLVHSSTYGGGNLASVVALSALREILAQDLVGHAERMGAYFKQALSEIAARYPFVSEVRGRGLMLGIQFDQAFTGAVNASAREFATRLPGDWHTTWKFLPDPVQAHLRAAMDRMEQALGEMFCMKFVTKLCQDHKILTFITANSSTVIRIQPPLIISKAEIDRFVGAFATVCEELSTFLD</sequence>
<keyword id="KW-0002">3D-structure</keyword>
<keyword id="KW-0032">Aminotransferase</keyword>
<keyword id="KW-0045">Antibiotic biosynthesis</keyword>
<keyword id="KW-0663">Pyridoxal phosphate</keyword>
<keyword id="KW-0808">Transferase</keyword>
<comment type="function">
    <text evidence="2">Involved in the biosynthesis of 2-methyl-3-n-amyl-pyrrole (MAP), one of the terminal products involved in the biosynthesis of the red antibiotic prodigiosin (Pig). Catalyzes the transamination to the aldehyde group of 3-acetyloctanal, resulting in an aminoketone, which spontaneously cyclizes to yield the dihydro form of MAP (H2MAP).</text>
</comment>
<comment type="cofactor">
    <cofactor evidence="2">
        <name>pyridoxal 5'-phosphate</name>
        <dbReference type="ChEBI" id="CHEBI:597326"/>
    </cofactor>
</comment>
<comment type="pathway">
    <text evidence="1 4">Antibiotic biosynthesis; prodigiosin biosynthesis.</text>
</comment>
<comment type="subunit">
    <text evidence="2">Homodimer.</text>
</comment>
<comment type="similarity">
    <text evidence="4">Belongs to the class-III pyridoxal-phosphate-dependent aminotransferase family.</text>
</comment>
<organism>
    <name type="scientific">Serratia sp. (strain FS14)</name>
    <dbReference type="NCBI Taxonomy" id="1327989"/>
    <lineage>
        <taxon>Bacteria</taxon>
        <taxon>Pseudomonadati</taxon>
        <taxon>Pseudomonadota</taxon>
        <taxon>Gammaproteobacteria</taxon>
        <taxon>Enterobacterales</taxon>
        <taxon>Yersiniaceae</taxon>
        <taxon>Serratia</taxon>
    </lineage>
</organism>
<evidence type="ECO:0000250" key="1">
    <source>
        <dbReference type="UniProtKB" id="Q5W267"/>
    </source>
</evidence>
<evidence type="ECO:0000269" key="2">
    <source>
    </source>
</evidence>
<evidence type="ECO:0000303" key="3">
    <source>
    </source>
</evidence>
<evidence type="ECO:0000305" key="4"/>
<evidence type="ECO:0000312" key="5">
    <source>
        <dbReference type="EMBL" id="AIA50007.1"/>
    </source>
</evidence>
<evidence type="ECO:0007829" key="6">
    <source>
        <dbReference type="PDB" id="4PPM"/>
    </source>
</evidence>
<dbReference type="EC" id="2.6.1.-" evidence="1"/>
<dbReference type="EMBL" id="CP005927">
    <property type="protein sequence ID" value="AIA50007.1"/>
    <property type="molecule type" value="Genomic_DNA"/>
</dbReference>
<dbReference type="RefSeq" id="WP_015376883.1">
    <property type="nucleotide sequence ID" value="NZ_CP005927.1"/>
</dbReference>
<dbReference type="PDB" id="4PPM">
    <property type="method" value="X-ray"/>
    <property type="resolution" value="2.30 A"/>
    <property type="chains" value="A/B=1-853"/>
</dbReference>
<dbReference type="PDBsum" id="4PPM"/>
<dbReference type="SMR" id="A0A0J9X1Q5"/>
<dbReference type="KEGG" id="serf:L085_23050"/>
<dbReference type="PATRIC" id="fig|1327989.4.peg.3250"/>
<dbReference type="HOGENOM" id="CLU_016845_0_0_6"/>
<dbReference type="BioCyc" id="MetaCyc:MONOMER-18837"/>
<dbReference type="UniPathway" id="UPA01072"/>
<dbReference type="EvolutionaryTrace" id="A0A0J9X1Q5"/>
<dbReference type="GO" id="GO:0042802">
    <property type="term" value="F:identical protein binding"/>
    <property type="evidence" value="ECO:0007669"/>
    <property type="project" value="TreeGrafter"/>
</dbReference>
<dbReference type="GO" id="GO:0070280">
    <property type="term" value="F:pyridoxal binding"/>
    <property type="evidence" value="ECO:0000314"/>
    <property type="project" value="UniProtKB"/>
</dbReference>
<dbReference type="GO" id="GO:0030170">
    <property type="term" value="F:pyridoxal phosphate binding"/>
    <property type="evidence" value="ECO:0007669"/>
    <property type="project" value="InterPro"/>
</dbReference>
<dbReference type="GO" id="GO:0008483">
    <property type="term" value="F:transaminase activity"/>
    <property type="evidence" value="ECO:0000314"/>
    <property type="project" value="UniProtKB"/>
</dbReference>
<dbReference type="GO" id="GO:0017000">
    <property type="term" value="P:antibiotic biosynthetic process"/>
    <property type="evidence" value="ECO:0000314"/>
    <property type="project" value="UniProtKB"/>
</dbReference>
<dbReference type="CDD" id="cd00610">
    <property type="entry name" value="OAT_like"/>
    <property type="match status" value="1"/>
</dbReference>
<dbReference type="DisProt" id="DP00913"/>
<dbReference type="FunFam" id="3.40.640.10:FF:000004">
    <property type="entry name" value="Acetylornithine aminotransferase"/>
    <property type="match status" value="1"/>
</dbReference>
<dbReference type="Gene3D" id="3.90.1150.10">
    <property type="entry name" value="Aspartate Aminotransferase, domain 1"/>
    <property type="match status" value="1"/>
</dbReference>
<dbReference type="Gene3D" id="3.40.50.720">
    <property type="entry name" value="NAD(P)-binding Rossmann-like Domain"/>
    <property type="match status" value="1"/>
</dbReference>
<dbReference type="Gene3D" id="3.40.640.10">
    <property type="entry name" value="Type I PLP-dependent aspartate aminotransferase-like (Major domain)"/>
    <property type="match status" value="1"/>
</dbReference>
<dbReference type="InterPro" id="IPR005814">
    <property type="entry name" value="Aminotrans_3"/>
</dbReference>
<dbReference type="InterPro" id="IPR049704">
    <property type="entry name" value="Aminotrans_3_PPA_site"/>
</dbReference>
<dbReference type="InterPro" id="IPR050103">
    <property type="entry name" value="Class-III_PLP-dep_AT"/>
</dbReference>
<dbReference type="InterPro" id="IPR036291">
    <property type="entry name" value="NAD(P)-bd_dom_sf"/>
</dbReference>
<dbReference type="InterPro" id="IPR015424">
    <property type="entry name" value="PyrdxlP-dep_Trfase"/>
</dbReference>
<dbReference type="InterPro" id="IPR015421">
    <property type="entry name" value="PyrdxlP-dep_Trfase_major"/>
</dbReference>
<dbReference type="InterPro" id="IPR015422">
    <property type="entry name" value="PyrdxlP-dep_Trfase_small"/>
</dbReference>
<dbReference type="PANTHER" id="PTHR11986">
    <property type="entry name" value="AMINOTRANSFERASE CLASS III"/>
    <property type="match status" value="1"/>
</dbReference>
<dbReference type="PANTHER" id="PTHR11986:SF121">
    <property type="entry name" value="BLR3010 PROTEIN"/>
    <property type="match status" value="1"/>
</dbReference>
<dbReference type="Pfam" id="PF00202">
    <property type="entry name" value="Aminotran_3"/>
    <property type="match status" value="1"/>
</dbReference>
<dbReference type="SUPFAM" id="SSF51735">
    <property type="entry name" value="NAD(P)-binding Rossmann-fold domains"/>
    <property type="match status" value="1"/>
</dbReference>
<dbReference type="SUPFAM" id="SSF53383">
    <property type="entry name" value="PLP-dependent transferases"/>
    <property type="match status" value="1"/>
</dbReference>
<dbReference type="PROSITE" id="PS00600">
    <property type="entry name" value="AA_TRANSFER_CLASS_3"/>
    <property type="match status" value="1"/>
</dbReference>
<feature type="chain" id="PRO_0000436242" description="Aminotransferase PigE">
    <location>
        <begin position="1"/>
        <end position="853"/>
    </location>
</feature>
<feature type="binding site" evidence="2">
    <location>
        <begin position="503"/>
        <end position="504"/>
    </location>
    <ligand>
        <name>pyridoxal 5'-phosphate</name>
        <dbReference type="ChEBI" id="CHEBI:597326"/>
    </ligand>
</feature>
<feature type="binding site" evidence="2">
    <location>
        <position position="680"/>
    </location>
    <ligand>
        <name>pyridoxal 5'-phosphate</name>
        <dbReference type="ChEBI" id="CHEBI:597326"/>
    </ligand>
</feature>
<feature type="modified residue" description="N6-(pyridoxal phosphate)lysine" evidence="2">
    <location>
        <position position="645"/>
    </location>
</feature>
<feature type="helix" evidence="6">
    <location>
        <begin position="377"/>
        <end position="386"/>
    </location>
</feature>
<feature type="helix" evidence="6">
    <location>
        <begin position="391"/>
        <end position="401"/>
    </location>
</feature>
<feature type="helix" evidence="6">
    <location>
        <begin position="404"/>
        <end position="412"/>
    </location>
</feature>
<feature type="strand" evidence="6">
    <location>
        <begin position="419"/>
        <end position="424"/>
    </location>
</feature>
<feature type="strand" evidence="6">
    <location>
        <begin position="426"/>
        <end position="429"/>
    </location>
</feature>
<feature type="strand" evidence="6">
    <location>
        <begin position="434"/>
        <end position="440"/>
    </location>
</feature>
<feature type="helix" evidence="6">
    <location>
        <begin position="441"/>
        <end position="443"/>
    </location>
</feature>
<feature type="helix" evidence="6">
    <location>
        <begin position="452"/>
        <end position="463"/>
    </location>
</feature>
<feature type="turn" evidence="6">
    <location>
        <begin position="471"/>
        <end position="473"/>
    </location>
</feature>
<feature type="helix" evidence="6">
    <location>
        <begin position="477"/>
        <end position="489"/>
    </location>
</feature>
<feature type="strand" evidence="6">
    <location>
        <begin position="490"/>
        <end position="492"/>
    </location>
</feature>
<feature type="strand" evidence="6">
    <location>
        <begin position="496"/>
        <end position="502"/>
    </location>
</feature>
<feature type="helix" evidence="6">
    <location>
        <begin position="503"/>
        <end position="518"/>
    </location>
</feature>
<feature type="strand" evidence="6">
    <location>
        <begin position="522"/>
        <end position="526"/>
    </location>
</feature>
<feature type="helix" evidence="6">
    <location>
        <begin position="535"/>
        <end position="538"/>
    </location>
</feature>
<feature type="helix" evidence="6">
    <location>
        <begin position="544"/>
        <end position="547"/>
    </location>
</feature>
<feature type="strand" evidence="6">
    <location>
        <begin position="557"/>
        <end position="560"/>
    </location>
</feature>
<feature type="helix" evidence="6">
    <location>
        <begin position="565"/>
        <end position="573"/>
    </location>
</feature>
<feature type="strand" evidence="6">
    <location>
        <begin position="577"/>
        <end position="582"/>
    </location>
</feature>
<feature type="strand" evidence="6">
    <location>
        <begin position="584"/>
        <end position="586"/>
    </location>
</feature>
<feature type="turn" evidence="6">
    <location>
        <begin position="587"/>
        <end position="590"/>
    </location>
</feature>
<feature type="helix" evidence="6">
    <location>
        <begin position="598"/>
        <end position="608"/>
    </location>
</feature>
<feature type="strand" evidence="6">
    <location>
        <begin position="612"/>
        <end position="616"/>
    </location>
</feature>
<feature type="turn" evidence="6">
    <location>
        <begin position="618"/>
        <end position="625"/>
    </location>
</feature>
<feature type="strand" evidence="6">
    <location>
        <begin position="626"/>
        <end position="629"/>
    </location>
</feature>
<feature type="helix" evidence="6">
    <location>
        <begin position="630"/>
        <end position="633"/>
    </location>
</feature>
<feature type="strand" evidence="6">
    <location>
        <begin position="639"/>
        <end position="643"/>
    </location>
</feature>
<feature type="helix" evidence="6">
    <location>
        <begin position="645"/>
        <end position="648"/>
    </location>
</feature>
<feature type="turn" evidence="6">
    <location>
        <begin position="649"/>
        <end position="651"/>
    </location>
</feature>
<feature type="strand" evidence="6">
    <location>
        <begin position="655"/>
        <end position="659"/>
    </location>
</feature>
<feature type="helix" evidence="6">
    <location>
        <begin position="661"/>
        <end position="668"/>
    </location>
</feature>
<feature type="turn" evidence="6">
    <location>
        <begin position="671"/>
        <end position="675"/>
    </location>
</feature>
<feature type="helix" evidence="6">
    <location>
        <begin position="685"/>
        <end position="700"/>
    </location>
</feature>
<feature type="helix" evidence="6">
    <location>
        <begin position="703"/>
        <end position="722"/>
    </location>
</feature>
<feature type="strand" evidence="6">
    <location>
        <begin position="726"/>
        <end position="734"/>
    </location>
</feature>
<feature type="strand" evidence="6">
    <location>
        <begin position="737"/>
        <end position="742"/>
    </location>
</feature>
<feature type="helix" evidence="6">
    <location>
        <begin position="767"/>
        <end position="770"/>
    </location>
</feature>
<feature type="helix" evidence="6">
    <location>
        <begin position="774"/>
        <end position="807"/>
    </location>
</feature>
<feature type="strand" evidence="6">
    <location>
        <begin position="818"/>
        <end position="823"/>
    </location>
</feature>
<feature type="helix" evidence="6">
    <location>
        <begin position="831"/>
        <end position="851"/>
    </location>
</feature>
<reference key="1">
    <citation type="journal article" date="2015" name="PLoS ONE">
        <title>Comparative genome analyses of Serratia marcescens FS14 reveals its high antagonistic potential.</title>
        <authorList>
            <person name="Li P."/>
            <person name="Kwok A.H."/>
            <person name="Jiang J."/>
            <person name="Ran T."/>
            <person name="Xu D."/>
            <person name="Wang W."/>
            <person name="Leung F.C."/>
        </authorList>
    </citation>
    <scope>NUCLEOTIDE SEQUENCE [LARGE SCALE GENOMIC DNA]</scope>
    <source>
        <strain>FS14</strain>
    </source>
</reference>
<reference key="2">
    <citation type="journal article" date="2014" name="Biochem. Biophys. Res. Commun.">
        <title>Crystal structure of the catalytic domain of PigE: a transaminase involved in the biosynthesis of 2-methyl-3-n-amyl-pyrrole (MAP) from Serratia sp. FS14.</title>
        <authorList>
            <person name="Lou X."/>
            <person name="Ran T."/>
            <person name="Han N."/>
            <person name="Gao Y."/>
            <person name="He J."/>
            <person name="Tang L."/>
            <person name="Xu D."/>
            <person name="Wang W."/>
        </authorList>
    </citation>
    <scope>X-RAY CRYSTALLOGRAPHY (2.30 ANGSTROMS) IN COMPLEX WITH PYRIDOXAL PHOSPHATE</scope>
    <scope>FUNCTION</scope>
    <scope>COFACTOR</scope>
    <scope>SUBUNIT</scope>
    <source>
        <strain>FS14</strain>
    </source>
</reference>
<gene>
    <name evidence="3" type="primary">pigE</name>
    <name evidence="5" type="ORF">L085_23050</name>
</gene>